<sequence length="414" mass="45983">METKNKKKVVLAYSGGLDTSVILKWLEETYGYEVIAACVNVGQTEDFAAIKKKALATGASKAYIVDVTEEFITDYIFPTLKAGAVYEDDYLLGTSFARPLISKKLVEIAEKEGAVAIAHGATGKGNDQVRFEATIKALNPNLKIIAPWRTWDLKSREDCIDYAVQHGIPIPVTKKDIYSRDENIWHISHEGGNLENPWNEHDDTIYKLSVSPEKSPDTPTYVELEFYKGIPVAVDGVKYEPIDMLTTLNKLGGAHGVGIIDIVENRLVGMKSRGVYETPGGTLLFAAHKALEKLTLDRDTTSFKKGISVKYAQLVYDGLWHTPLKDALDQFVNSTQEFVTGQVKLKLYKGNCTAVASASPFSLYNEDFVTFGEDHVYNQQDAEGFINLFALPLTIRALMLEEKLQGEAKEKKII</sequence>
<keyword id="KW-0028">Amino-acid biosynthesis</keyword>
<keyword id="KW-0055">Arginine biosynthesis</keyword>
<keyword id="KW-0067">ATP-binding</keyword>
<keyword id="KW-0963">Cytoplasm</keyword>
<keyword id="KW-0436">Ligase</keyword>
<keyword id="KW-0547">Nucleotide-binding</keyword>
<keyword id="KW-1185">Reference proteome</keyword>
<feature type="chain" id="PRO_0000321299" description="Argininosuccinate synthase">
    <location>
        <begin position="1"/>
        <end position="414"/>
    </location>
</feature>
<feature type="binding site" evidence="1">
    <location>
        <begin position="12"/>
        <end position="20"/>
    </location>
    <ligand>
        <name>ATP</name>
        <dbReference type="ChEBI" id="CHEBI:30616"/>
    </ligand>
</feature>
<feature type="binding site" evidence="1">
    <location>
        <position position="90"/>
    </location>
    <ligand>
        <name>L-citrulline</name>
        <dbReference type="ChEBI" id="CHEBI:57743"/>
    </ligand>
</feature>
<feature type="binding site" evidence="1">
    <location>
        <position position="95"/>
    </location>
    <ligand>
        <name>L-citrulline</name>
        <dbReference type="ChEBI" id="CHEBI:57743"/>
    </ligand>
</feature>
<feature type="binding site" evidence="1">
    <location>
        <position position="120"/>
    </location>
    <ligand>
        <name>ATP</name>
        <dbReference type="ChEBI" id="CHEBI:30616"/>
    </ligand>
</feature>
<feature type="binding site" evidence="1">
    <location>
        <position position="122"/>
    </location>
    <ligand>
        <name>L-aspartate</name>
        <dbReference type="ChEBI" id="CHEBI:29991"/>
    </ligand>
</feature>
<feature type="binding site" evidence="1">
    <location>
        <position position="126"/>
    </location>
    <ligand>
        <name>L-aspartate</name>
        <dbReference type="ChEBI" id="CHEBI:29991"/>
    </ligand>
</feature>
<feature type="binding site" evidence="1">
    <location>
        <position position="126"/>
    </location>
    <ligand>
        <name>L-citrulline</name>
        <dbReference type="ChEBI" id="CHEBI:57743"/>
    </ligand>
</feature>
<feature type="binding site" evidence="1">
    <location>
        <position position="127"/>
    </location>
    <ligand>
        <name>L-aspartate</name>
        <dbReference type="ChEBI" id="CHEBI:29991"/>
    </ligand>
</feature>
<feature type="binding site" evidence="1">
    <location>
        <position position="130"/>
    </location>
    <ligand>
        <name>L-citrulline</name>
        <dbReference type="ChEBI" id="CHEBI:57743"/>
    </ligand>
</feature>
<feature type="binding site" evidence="1">
    <location>
        <position position="179"/>
    </location>
    <ligand>
        <name>L-citrulline</name>
        <dbReference type="ChEBI" id="CHEBI:57743"/>
    </ligand>
</feature>
<feature type="binding site" evidence="1">
    <location>
        <position position="188"/>
    </location>
    <ligand>
        <name>L-citrulline</name>
        <dbReference type="ChEBI" id="CHEBI:57743"/>
    </ligand>
</feature>
<feature type="binding site" evidence="1">
    <location>
        <position position="264"/>
    </location>
    <ligand>
        <name>L-citrulline</name>
        <dbReference type="ChEBI" id="CHEBI:57743"/>
    </ligand>
</feature>
<feature type="binding site" evidence="1">
    <location>
        <position position="276"/>
    </location>
    <ligand>
        <name>L-citrulline</name>
        <dbReference type="ChEBI" id="CHEBI:57743"/>
    </ligand>
</feature>
<evidence type="ECO:0000255" key="1">
    <source>
        <dbReference type="HAMAP-Rule" id="MF_00005"/>
    </source>
</evidence>
<reference key="1">
    <citation type="journal article" date="2016" name="Genome Announc.">
        <title>Complete genome sequence of Alkaliphilus metalliredigens strain QYMF, an alkaliphilic and metal-reducing bacterium isolated from borax-contaminated leachate ponds.</title>
        <authorList>
            <person name="Hwang C."/>
            <person name="Copeland A."/>
            <person name="Lucas S."/>
            <person name="Lapidus A."/>
            <person name="Barry K."/>
            <person name="Detter J.C."/>
            <person name="Glavina Del Rio T."/>
            <person name="Hammon N."/>
            <person name="Israni S."/>
            <person name="Dalin E."/>
            <person name="Tice H."/>
            <person name="Pitluck S."/>
            <person name="Chertkov O."/>
            <person name="Brettin T."/>
            <person name="Bruce D."/>
            <person name="Han C."/>
            <person name="Schmutz J."/>
            <person name="Larimer F."/>
            <person name="Land M.L."/>
            <person name="Hauser L."/>
            <person name="Kyrpides N."/>
            <person name="Mikhailova N."/>
            <person name="Ye Q."/>
            <person name="Zhou J."/>
            <person name="Richardson P."/>
            <person name="Fields M.W."/>
        </authorList>
    </citation>
    <scope>NUCLEOTIDE SEQUENCE [LARGE SCALE GENOMIC DNA]</scope>
    <source>
        <strain>QYMF</strain>
    </source>
</reference>
<gene>
    <name evidence="1" type="primary">argG</name>
    <name type="ordered locus">Amet_0653</name>
</gene>
<proteinExistence type="inferred from homology"/>
<accession>A6TL10</accession>
<protein>
    <recommendedName>
        <fullName evidence="1">Argininosuccinate synthase</fullName>
        <ecNumber evidence="1">6.3.4.5</ecNumber>
    </recommendedName>
    <alternativeName>
        <fullName evidence="1">Citrulline--aspartate ligase</fullName>
    </alternativeName>
</protein>
<organism>
    <name type="scientific">Alkaliphilus metalliredigens (strain QYMF)</name>
    <dbReference type="NCBI Taxonomy" id="293826"/>
    <lineage>
        <taxon>Bacteria</taxon>
        <taxon>Bacillati</taxon>
        <taxon>Bacillota</taxon>
        <taxon>Clostridia</taxon>
        <taxon>Peptostreptococcales</taxon>
        <taxon>Natronincolaceae</taxon>
        <taxon>Alkaliphilus</taxon>
    </lineage>
</organism>
<comment type="catalytic activity">
    <reaction evidence="1">
        <text>L-citrulline + L-aspartate + ATP = 2-(N(omega)-L-arginino)succinate + AMP + diphosphate + H(+)</text>
        <dbReference type="Rhea" id="RHEA:10932"/>
        <dbReference type="ChEBI" id="CHEBI:15378"/>
        <dbReference type="ChEBI" id="CHEBI:29991"/>
        <dbReference type="ChEBI" id="CHEBI:30616"/>
        <dbReference type="ChEBI" id="CHEBI:33019"/>
        <dbReference type="ChEBI" id="CHEBI:57472"/>
        <dbReference type="ChEBI" id="CHEBI:57743"/>
        <dbReference type="ChEBI" id="CHEBI:456215"/>
        <dbReference type="EC" id="6.3.4.5"/>
    </reaction>
</comment>
<comment type="pathway">
    <text evidence="1">Amino-acid biosynthesis; L-arginine biosynthesis; L-arginine from L-ornithine and carbamoyl phosphate: step 2/3.</text>
</comment>
<comment type="subunit">
    <text evidence="1">Homotetramer.</text>
</comment>
<comment type="subcellular location">
    <subcellularLocation>
        <location evidence="1">Cytoplasm</location>
    </subcellularLocation>
</comment>
<comment type="similarity">
    <text evidence="1">Belongs to the argininosuccinate synthase family. Type 1 subfamily.</text>
</comment>
<name>ASSY_ALKMQ</name>
<dbReference type="EC" id="6.3.4.5" evidence="1"/>
<dbReference type="EMBL" id="CP000724">
    <property type="protein sequence ID" value="ABR46878.1"/>
    <property type="molecule type" value="Genomic_DNA"/>
</dbReference>
<dbReference type="RefSeq" id="WP_011971786.1">
    <property type="nucleotide sequence ID" value="NC_009633.1"/>
</dbReference>
<dbReference type="SMR" id="A6TL10"/>
<dbReference type="STRING" id="293826.Amet_0653"/>
<dbReference type="KEGG" id="amt:Amet_0653"/>
<dbReference type="eggNOG" id="COG0137">
    <property type="taxonomic scope" value="Bacteria"/>
</dbReference>
<dbReference type="HOGENOM" id="CLU_032784_4_2_9"/>
<dbReference type="OrthoDB" id="9801641at2"/>
<dbReference type="UniPathway" id="UPA00068">
    <property type="reaction ID" value="UER00113"/>
</dbReference>
<dbReference type="Proteomes" id="UP000001572">
    <property type="component" value="Chromosome"/>
</dbReference>
<dbReference type="GO" id="GO:0005737">
    <property type="term" value="C:cytoplasm"/>
    <property type="evidence" value="ECO:0007669"/>
    <property type="project" value="UniProtKB-SubCell"/>
</dbReference>
<dbReference type="GO" id="GO:0004055">
    <property type="term" value="F:argininosuccinate synthase activity"/>
    <property type="evidence" value="ECO:0007669"/>
    <property type="project" value="UniProtKB-UniRule"/>
</dbReference>
<dbReference type="GO" id="GO:0005524">
    <property type="term" value="F:ATP binding"/>
    <property type="evidence" value="ECO:0007669"/>
    <property type="project" value="UniProtKB-UniRule"/>
</dbReference>
<dbReference type="GO" id="GO:0000053">
    <property type="term" value="P:argininosuccinate metabolic process"/>
    <property type="evidence" value="ECO:0007669"/>
    <property type="project" value="TreeGrafter"/>
</dbReference>
<dbReference type="GO" id="GO:0006526">
    <property type="term" value="P:L-arginine biosynthetic process"/>
    <property type="evidence" value="ECO:0007669"/>
    <property type="project" value="UniProtKB-UniRule"/>
</dbReference>
<dbReference type="GO" id="GO:0000050">
    <property type="term" value="P:urea cycle"/>
    <property type="evidence" value="ECO:0007669"/>
    <property type="project" value="TreeGrafter"/>
</dbReference>
<dbReference type="CDD" id="cd01999">
    <property type="entry name" value="ASS"/>
    <property type="match status" value="1"/>
</dbReference>
<dbReference type="FunFam" id="3.40.50.620:FF:000019">
    <property type="entry name" value="Argininosuccinate synthase"/>
    <property type="match status" value="1"/>
</dbReference>
<dbReference type="FunFam" id="3.90.1260.10:FF:000007">
    <property type="entry name" value="Argininosuccinate synthase"/>
    <property type="match status" value="1"/>
</dbReference>
<dbReference type="Gene3D" id="3.90.1260.10">
    <property type="entry name" value="Argininosuccinate synthetase, chain A, domain 2"/>
    <property type="match status" value="1"/>
</dbReference>
<dbReference type="Gene3D" id="3.40.50.620">
    <property type="entry name" value="HUPs"/>
    <property type="match status" value="1"/>
</dbReference>
<dbReference type="HAMAP" id="MF_00005">
    <property type="entry name" value="Arg_succ_synth_type1"/>
    <property type="match status" value="1"/>
</dbReference>
<dbReference type="InterPro" id="IPR048268">
    <property type="entry name" value="Arginosuc_syn_C"/>
</dbReference>
<dbReference type="InterPro" id="IPR048267">
    <property type="entry name" value="Arginosuc_syn_N"/>
</dbReference>
<dbReference type="InterPro" id="IPR001518">
    <property type="entry name" value="Arginosuc_synth"/>
</dbReference>
<dbReference type="InterPro" id="IPR018223">
    <property type="entry name" value="Arginosuc_synth_CS"/>
</dbReference>
<dbReference type="InterPro" id="IPR023434">
    <property type="entry name" value="Arginosuc_synth_type_1_subfam"/>
</dbReference>
<dbReference type="InterPro" id="IPR024074">
    <property type="entry name" value="AS_cat/multimer_dom_body"/>
</dbReference>
<dbReference type="InterPro" id="IPR014729">
    <property type="entry name" value="Rossmann-like_a/b/a_fold"/>
</dbReference>
<dbReference type="NCBIfam" id="TIGR00032">
    <property type="entry name" value="argG"/>
    <property type="match status" value="1"/>
</dbReference>
<dbReference type="NCBIfam" id="NF001770">
    <property type="entry name" value="PRK00509.1"/>
    <property type="match status" value="1"/>
</dbReference>
<dbReference type="PANTHER" id="PTHR11587">
    <property type="entry name" value="ARGININOSUCCINATE SYNTHASE"/>
    <property type="match status" value="1"/>
</dbReference>
<dbReference type="PANTHER" id="PTHR11587:SF2">
    <property type="entry name" value="ARGININOSUCCINATE SYNTHASE"/>
    <property type="match status" value="1"/>
</dbReference>
<dbReference type="Pfam" id="PF20979">
    <property type="entry name" value="Arginosuc_syn_C"/>
    <property type="match status" value="1"/>
</dbReference>
<dbReference type="Pfam" id="PF00764">
    <property type="entry name" value="Arginosuc_synth"/>
    <property type="match status" value="1"/>
</dbReference>
<dbReference type="SUPFAM" id="SSF52402">
    <property type="entry name" value="Adenine nucleotide alpha hydrolases-like"/>
    <property type="match status" value="1"/>
</dbReference>
<dbReference type="SUPFAM" id="SSF69864">
    <property type="entry name" value="Argininosuccinate synthetase, C-terminal domain"/>
    <property type="match status" value="1"/>
</dbReference>
<dbReference type="PROSITE" id="PS00564">
    <property type="entry name" value="ARGININOSUCCIN_SYN_1"/>
    <property type="match status" value="1"/>
</dbReference>
<dbReference type="PROSITE" id="PS00565">
    <property type="entry name" value="ARGININOSUCCIN_SYN_2"/>
    <property type="match status" value="1"/>
</dbReference>